<keyword id="KW-0067">ATP-binding</keyword>
<keyword id="KW-0436">Ligase</keyword>
<keyword id="KW-0460">Magnesium</keyword>
<keyword id="KW-0464">Manganese</keyword>
<keyword id="KW-0479">Metal-binding</keyword>
<keyword id="KW-0547">Nucleotide-binding</keyword>
<keyword id="KW-0658">Purine biosynthesis</keyword>
<keyword id="KW-1185">Reference proteome</keyword>
<accession>Q9HUV8</accession>
<comment type="catalytic activity">
    <reaction evidence="2">
        <text>5-phospho-beta-D-ribosylamine + glycine + ATP = N(1)-(5-phospho-beta-D-ribosyl)glycinamide + ADP + phosphate + H(+)</text>
        <dbReference type="Rhea" id="RHEA:17453"/>
        <dbReference type="ChEBI" id="CHEBI:15378"/>
        <dbReference type="ChEBI" id="CHEBI:30616"/>
        <dbReference type="ChEBI" id="CHEBI:43474"/>
        <dbReference type="ChEBI" id="CHEBI:57305"/>
        <dbReference type="ChEBI" id="CHEBI:58681"/>
        <dbReference type="ChEBI" id="CHEBI:143788"/>
        <dbReference type="ChEBI" id="CHEBI:456216"/>
        <dbReference type="EC" id="6.3.4.13"/>
    </reaction>
</comment>
<comment type="cofactor">
    <cofactor evidence="1">
        <name>Mg(2+)</name>
        <dbReference type="ChEBI" id="CHEBI:18420"/>
    </cofactor>
    <cofactor evidence="1">
        <name>Mn(2+)</name>
        <dbReference type="ChEBI" id="CHEBI:29035"/>
    </cofactor>
    <text evidence="1">Binds 1 Mg(2+) or Mn(2+) ion per subunit.</text>
</comment>
<comment type="pathway">
    <text evidence="2">Purine metabolism; IMP biosynthesis via de novo pathway; N(1)-(5-phospho-D-ribosyl)glycinamide from 5-phospho-alpha-D-ribose 1-diphosphate: step 2/2.</text>
</comment>
<comment type="similarity">
    <text evidence="2">Belongs to the GARS family.</text>
</comment>
<feature type="chain" id="PRO_0000151469" description="Phosphoribosylamine--glycine ligase">
    <location>
        <begin position="1"/>
        <end position="429"/>
    </location>
</feature>
<feature type="domain" description="ATP-grasp" evidence="2">
    <location>
        <begin position="108"/>
        <end position="315"/>
    </location>
</feature>
<feature type="binding site" evidence="2">
    <location>
        <begin position="134"/>
        <end position="195"/>
    </location>
    <ligand>
        <name>ATP</name>
        <dbReference type="ChEBI" id="CHEBI:30616"/>
    </ligand>
</feature>
<feature type="binding site" evidence="2">
    <location>
        <position position="285"/>
    </location>
    <ligand>
        <name>Mg(2+)</name>
        <dbReference type="ChEBI" id="CHEBI:18420"/>
    </ligand>
</feature>
<feature type="binding site" evidence="2">
    <location>
        <position position="287"/>
    </location>
    <ligand>
        <name>Mg(2+)</name>
        <dbReference type="ChEBI" id="CHEBI:18420"/>
    </ligand>
</feature>
<gene>
    <name evidence="2" type="primary">purD</name>
    <name type="ordered locus">PA4855</name>
</gene>
<sequence>MNVLIIGSGGREHALAWKVAQDPRVAKVFVAPGNAGTATEAKCENVAIDVLALEQLADFAAKNVQLTIVGPEAPLVAGVVDLFRERGLDIFGPTAGAAQLEGSKAFTKDFLARHRIPTAAYRNFTEVEPALAYLHEQGAPIVIKADGLAAGKGVIVAMNLDEAEAAVRDMLAGNAFGDAGSRVVIEEFLDGEEASFIVMVDGQNVLPMATSQDHKRVGDGDSGPNTGGMGAYSPAPVVTAEVHQRVLDEVIYPTVRGMAEEGNVYTGFLYAGLMIDKSGAPKVIEFNCRFGDPETQPIMVRLESSLVLLVEAALAKALDKVEATWDPRPTVGVVLAAGGYPGDYAKGEVIEGLAEAAALDGKVFHAGTALKDGQVVTSGGRVLCATAIGESVSAAQQQAYRLAEKIRWNGCFYRKDIGYRAIARERGES</sequence>
<reference key="1">
    <citation type="journal article" date="2000" name="Nature">
        <title>Complete genome sequence of Pseudomonas aeruginosa PAO1, an opportunistic pathogen.</title>
        <authorList>
            <person name="Stover C.K."/>
            <person name="Pham X.-Q.T."/>
            <person name="Erwin A.L."/>
            <person name="Mizoguchi S.D."/>
            <person name="Warrener P."/>
            <person name="Hickey M.J."/>
            <person name="Brinkman F.S.L."/>
            <person name="Hufnagle W.O."/>
            <person name="Kowalik D.J."/>
            <person name="Lagrou M."/>
            <person name="Garber R.L."/>
            <person name="Goltry L."/>
            <person name="Tolentino E."/>
            <person name="Westbrock-Wadman S."/>
            <person name="Yuan Y."/>
            <person name="Brody L.L."/>
            <person name="Coulter S.N."/>
            <person name="Folger K.R."/>
            <person name="Kas A."/>
            <person name="Larbig K."/>
            <person name="Lim R.M."/>
            <person name="Smith K.A."/>
            <person name="Spencer D.H."/>
            <person name="Wong G.K.-S."/>
            <person name="Wu Z."/>
            <person name="Paulsen I.T."/>
            <person name="Reizer J."/>
            <person name="Saier M.H. Jr."/>
            <person name="Hancock R.E.W."/>
            <person name="Lory S."/>
            <person name="Olson M.V."/>
        </authorList>
    </citation>
    <scope>NUCLEOTIDE SEQUENCE [LARGE SCALE GENOMIC DNA]</scope>
    <source>
        <strain>ATCC 15692 / DSM 22644 / CIP 104116 / JCM 14847 / LMG 12228 / 1C / PRS 101 / PAO1</strain>
    </source>
</reference>
<protein>
    <recommendedName>
        <fullName evidence="2">Phosphoribosylamine--glycine ligase</fullName>
        <ecNumber evidence="2">6.3.4.13</ecNumber>
    </recommendedName>
    <alternativeName>
        <fullName evidence="2">GARS</fullName>
    </alternativeName>
    <alternativeName>
        <fullName evidence="2">Glycinamide ribonucleotide synthetase</fullName>
    </alternativeName>
    <alternativeName>
        <fullName evidence="2">Phosphoribosylglycinamide synthetase</fullName>
    </alternativeName>
</protein>
<proteinExistence type="inferred from homology"/>
<dbReference type="EC" id="6.3.4.13" evidence="2"/>
<dbReference type="EMBL" id="AE004091">
    <property type="protein sequence ID" value="AAG08240.1"/>
    <property type="molecule type" value="Genomic_DNA"/>
</dbReference>
<dbReference type="PIR" id="F83038">
    <property type="entry name" value="F83038"/>
</dbReference>
<dbReference type="RefSeq" id="NP_253542.1">
    <property type="nucleotide sequence ID" value="NC_002516.2"/>
</dbReference>
<dbReference type="RefSeq" id="WP_003105150.1">
    <property type="nucleotide sequence ID" value="NZ_QZGE01000002.1"/>
</dbReference>
<dbReference type="SMR" id="Q9HUV8"/>
<dbReference type="FunCoup" id="Q9HUV8">
    <property type="interactions" value="471"/>
</dbReference>
<dbReference type="STRING" id="208964.PA4855"/>
<dbReference type="PaxDb" id="208964-PA4855"/>
<dbReference type="GeneID" id="878236"/>
<dbReference type="KEGG" id="pae:PA4855"/>
<dbReference type="PATRIC" id="fig|208964.12.peg.5087"/>
<dbReference type="PseudoCAP" id="PA4855"/>
<dbReference type="HOGENOM" id="CLU_027420_3_1_6"/>
<dbReference type="InParanoid" id="Q9HUV8"/>
<dbReference type="OrthoDB" id="9807240at2"/>
<dbReference type="PhylomeDB" id="Q9HUV8"/>
<dbReference type="BioCyc" id="PAER208964:G1FZ6-4969-MONOMER"/>
<dbReference type="UniPathway" id="UPA00074">
    <property type="reaction ID" value="UER00125"/>
</dbReference>
<dbReference type="Proteomes" id="UP000002438">
    <property type="component" value="Chromosome"/>
</dbReference>
<dbReference type="GO" id="GO:0005524">
    <property type="term" value="F:ATP binding"/>
    <property type="evidence" value="ECO:0007669"/>
    <property type="project" value="UniProtKB-KW"/>
</dbReference>
<dbReference type="GO" id="GO:0046872">
    <property type="term" value="F:metal ion binding"/>
    <property type="evidence" value="ECO:0007669"/>
    <property type="project" value="UniProtKB-KW"/>
</dbReference>
<dbReference type="GO" id="GO:0004637">
    <property type="term" value="F:phosphoribosylamine-glycine ligase activity"/>
    <property type="evidence" value="ECO:0007669"/>
    <property type="project" value="UniProtKB-UniRule"/>
</dbReference>
<dbReference type="GO" id="GO:0006189">
    <property type="term" value="P:'de novo' IMP biosynthetic process"/>
    <property type="evidence" value="ECO:0007669"/>
    <property type="project" value="UniProtKB-UniRule"/>
</dbReference>
<dbReference type="GO" id="GO:0009113">
    <property type="term" value="P:purine nucleobase biosynthetic process"/>
    <property type="evidence" value="ECO:0007669"/>
    <property type="project" value="InterPro"/>
</dbReference>
<dbReference type="FunFam" id="3.30.470.20:FF:000031">
    <property type="entry name" value="Phosphoribosylamine--glycine ligase"/>
    <property type="match status" value="1"/>
</dbReference>
<dbReference type="FunFam" id="3.40.50.20:FF:000006">
    <property type="entry name" value="Phosphoribosylamine--glycine ligase, chloroplastic"/>
    <property type="match status" value="1"/>
</dbReference>
<dbReference type="FunFam" id="3.30.1490.20:FF:000006">
    <property type="entry name" value="phosphoribosylamine--glycine ligase, chloroplastic-like"/>
    <property type="match status" value="1"/>
</dbReference>
<dbReference type="FunFam" id="3.90.600.10:FF:000001">
    <property type="entry name" value="Trifunctional purine biosynthetic protein adenosine-3"/>
    <property type="match status" value="1"/>
</dbReference>
<dbReference type="Gene3D" id="3.40.50.20">
    <property type="match status" value="1"/>
</dbReference>
<dbReference type="Gene3D" id="3.30.1490.20">
    <property type="entry name" value="ATP-grasp fold, A domain"/>
    <property type="match status" value="1"/>
</dbReference>
<dbReference type="Gene3D" id="3.30.470.20">
    <property type="entry name" value="ATP-grasp fold, B domain"/>
    <property type="match status" value="1"/>
</dbReference>
<dbReference type="Gene3D" id="3.90.600.10">
    <property type="entry name" value="Phosphoribosylglycinamide synthetase, C-terminal domain"/>
    <property type="match status" value="1"/>
</dbReference>
<dbReference type="HAMAP" id="MF_00138">
    <property type="entry name" value="GARS"/>
    <property type="match status" value="1"/>
</dbReference>
<dbReference type="InterPro" id="IPR011761">
    <property type="entry name" value="ATP-grasp"/>
</dbReference>
<dbReference type="InterPro" id="IPR013815">
    <property type="entry name" value="ATP_grasp_subdomain_1"/>
</dbReference>
<dbReference type="InterPro" id="IPR016185">
    <property type="entry name" value="PreATP-grasp_dom_sf"/>
</dbReference>
<dbReference type="InterPro" id="IPR020561">
    <property type="entry name" value="PRibGlycinamid_synth_ATP-grasp"/>
</dbReference>
<dbReference type="InterPro" id="IPR000115">
    <property type="entry name" value="PRibGlycinamide_synth"/>
</dbReference>
<dbReference type="InterPro" id="IPR020560">
    <property type="entry name" value="PRibGlycinamide_synth_C-dom"/>
</dbReference>
<dbReference type="InterPro" id="IPR037123">
    <property type="entry name" value="PRibGlycinamide_synth_C_sf"/>
</dbReference>
<dbReference type="InterPro" id="IPR020559">
    <property type="entry name" value="PRibGlycinamide_synth_CS"/>
</dbReference>
<dbReference type="InterPro" id="IPR020562">
    <property type="entry name" value="PRibGlycinamide_synth_N"/>
</dbReference>
<dbReference type="InterPro" id="IPR011054">
    <property type="entry name" value="Rudment_hybrid_motif"/>
</dbReference>
<dbReference type="NCBIfam" id="TIGR00877">
    <property type="entry name" value="purD"/>
    <property type="match status" value="1"/>
</dbReference>
<dbReference type="PANTHER" id="PTHR43472">
    <property type="entry name" value="PHOSPHORIBOSYLAMINE--GLYCINE LIGASE"/>
    <property type="match status" value="1"/>
</dbReference>
<dbReference type="PANTHER" id="PTHR43472:SF1">
    <property type="entry name" value="PHOSPHORIBOSYLAMINE--GLYCINE LIGASE, CHLOROPLASTIC"/>
    <property type="match status" value="1"/>
</dbReference>
<dbReference type="Pfam" id="PF01071">
    <property type="entry name" value="GARS_A"/>
    <property type="match status" value="1"/>
</dbReference>
<dbReference type="Pfam" id="PF02843">
    <property type="entry name" value="GARS_C"/>
    <property type="match status" value="1"/>
</dbReference>
<dbReference type="Pfam" id="PF02844">
    <property type="entry name" value="GARS_N"/>
    <property type="match status" value="1"/>
</dbReference>
<dbReference type="SMART" id="SM01209">
    <property type="entry name" value="GARS_A"/>
    <property type="match status" value="1"/>
</dbReference>
<dbReference type="SMART" id="SM01210">
    <property type="entry name" value="GARS_C"/>
    <property type="match status" value="1"/>
</dbReference>
<dbReference type="SUPFAM" id="SSF56059">
    <property type="entry name" value="Glutathione synthetase ATP-binding domain-like"/>
    <property type="match status" value="1"/>
</dbReference>
<dbReference type="SUPFAM" id="SSF52440">
    <property type="entry name" value="PreATP-grasp domain"/>
    <property type="match status" value="1"/>
</dbReference>
<dbReference type="SUPFAM" id="SSF51246">
    <property type="entry name" value="Rudiment single hybrid motif"/>
    <property type="match status" value="1"/>
</dbReference>
<dbReference type="PROSITE" id="PS50975">
    <property type="entry name" value="ATP_GRASP"/>
    <property type="match status" value="1"/>
</dbReference>
<dbReference type="PROSITE" id="PS00184">
    <property type="entry name" value="GARS"/>
    <property type="match status" value="1"/>
</dbReference>
<organism>
    <name type="scientific">Pseudomonas aeruginosa (strain ATCC 15692 / DSM 22644 / CIP 104116 / JCM 14847 / LMG 12228 / 1C / PRS 101 / PAO1)</name>
    <dbReference type="NCBI Taxonomy" id="208964"/>
    <lineage>
        <taxon>Bacteria</taxon>
        <taxon>Pseudomonadati</taxon>
        <taxon>Pseudomonadota</taxon>
        <taxon>Gammaproteobacteria</taxon>
        <taxon>Pseudomonadales</taxon>
        <taxon>Pseudomonadaceae</taxon>
        <taxon>Pseudomonas</taxon>
    </lineage>
</organism>
<evidence type="ECO:0000250" key="1"/>
<evidence type="ECO:0000255" key="2">
    <source>
        <dbReference type="HAMAP-Rule" id="MF_00138"/>
    </source>
</evidence>
<name>PUR2_PSEAE</name>